<dbReference type="EC" id="2.1.2.1" evidence="1"/>
<dbReference type="EMBL" id="CP001392">
    <property type="protein sequence ID" value="ACM33500.1"/>
    <property type="molecule type" value="Genomic_DNA"/>
</dbReference>
<dbReference type="RefSeq" id="WP_011804931.1">
    <property type="nucleotide sequence ID" value="NC_011992.1"/>
</dbReference>
<dbReference type="SMR" id="B9MAC8"/>
<dbReference type="KEGG" id="dia:Dtpsy_2044"/>
<dbReference type="eggNOG" id="COG0112">
    <property type="taxonomic scope" value="Bacteria"/>
</dbReference>
<dbReference type="HOGENOM" id="CLU_022477_2_1_4"/>
<dbReference type="UniPathway" id="UPA00193"/>
<dbReference type="UniPathway" id="UPA00288">
    <property type="reaction ID" value="UER01023"/>
</dbReference>
<dbReference type="Proteomes" id="UP000000450">
    <property type="component" value="Chromosome"/>
</dbReference>
<dbReference type="GO" id="GO:0005829">
    <property type="term" value="C:cytosol"/>
    <property type="evidence" value="ECO:0007669"/>
    <property type="project" value="TreeGrafter"/>
</dbReference>
<dbReference type="GO" id="GO:0004372">
    <property type="term" value="F:glycine hydroxymethyltransferase activity"/>
    <property type="evidence" value="ECO:0007669"/>
    <property type="project" value="UniProtKB-UniRule"/>
</dbReference>
<dbReference type="GO" id="GO:0030170">
    <property type="term" value="F:pyridoxal phosphate binding"/>
    <property type="evidence" value="ECO:0007669"/>
    <property type="project" value="UniProtKB-UniRule"/>
</dbReference>
<dbReference type="GO" id="GO:0019264">
    <property type="term" value="P:glycine biosynthetic process from serine"/>
    <property type="evidence" value="ECO:0007669"/>
    <property type="project" value="UniProtKB-UniRule"/>
</dbReference>
<dbReference type="GO" id="GO:0035999">
    <property type="term" value="P:tetrahydrofolate interconversion"/>
    <property type="evidence" value="ECO:0007669"/>
    <property type="project" value="UniProtKB-UniRule"/>
</dbReference>
<dbReference type="CDD" id="cd00378">
    <property type="entry name" value="SHMT"/>
    <property type="match status" value="1"/>
</dbReference>
<dbReference type="FunFam" id="3.40.640.10:FF:000001">
    <property type="entry name" value="Serine hydroxymethyltransferase"/>
    <property type="match status" value="1"/>
</dbReference>
<dbReference type="FunFam" id="3.90.1150.10:FF:000003">
    <property type="entry name" value="Serine hydroxymethyltransferase"/>
    <property type="match status" value="1"/>
</dbReference>
<dbReference type="Gene3D" id="3.90.1150.10">
    <property type="entry name" value="Aspartate Aminotransferase, domain 1"/>
    <property type="match status" value="1"/>
</dbReference>
<dbReference type="Gene3D" id="3.40.640.10">
    <property type="entry name" value="Type I PLP-dependent aspartate aminotransferase-like (Major domain)"/>
    <property type="match status" value="1"/>
</dbReference>
<dbReference type="HAMAP" id="MF_00051">
    <property type="entry name" value="SHMT"/>
    <property type="match status" value="1"/>
</dbReference>
<dbReference type="InterPro" id="IPR015424">
    <property type="entry name" value="PyrdxlP-dep_Trfase"/>
</dbReference>
<dbReference type="InterPro" id="IPR015421">
    <property type="entry name" value="PyrdxlP-dep_Trfase_major"/>
</dbReference>
<dbReference type="InterPro" id="IPR015422">
    <property type="entry name" value="PyrdxlP-dep_Trfase_small"/>
</dbReference>
<dbReference type="InterPro" id="IPR001085">
    <property type="entry name" value="Ser_HO-MeTrfase"/>
</dbReference>
<dbReference type="InterPro" id="IPR049943">
    <property type="entry name" value="Ser_HO-MeTrfase-like"/>
</dbReference>
<dbReference type="InterPro" id="IPR019798">
    <property type="entry name" value="Ser_HO-MeTrfase_PLP_BS"/>
</dbReference>
<dbReference type="InterPro" id="IPR039429">
    <property type="entry name" value="SHMT-like_dom"/>
</dbReference>
<dbReference type="NCBIfam" id="NF000586">
    <property type="entry name" value="PRK00011.1"/>
    <property type="match status" value="1"/>
</dbReference>
<dbReference type="PANTHER" id="PTHR11680">
    <property type="entry name" value="SERINE HYDROXYMETHYLTRANSFERASE"/>
    <property type="match status" value="1"/>
</dbReference>
<dbReference type="PANTHER" id="PTHR11680:SF50">
    <property type="entry name" value="SERINE HYDROXYMETHYLTRANSFERASE"/>
    <property type="match status" value="1"/>
</dbReference>
<dbReference type="Pfam" id="PF00464">
    <property type="entry name" value="SHMT"/>
    <property type="match status" value="1"/>
</dbReference>
<dbReference type="PIRSF" id="PIRSF000412">
    <property type="entry name" value="SHMT"/>
    <property type="match status" value="1"/>
</dbReference>
<dbReference type="SUPFAM" id="SSF53383">
    <property type="entry name" value="PLP-dependent transferases"/>
    <property type="match status" value="1"/>
</dbReference>
<dbReference type="PROSITE" id="PS00096">
    <property type="entry name" value="SHMT"/>
    <property type="match status" value="1"/>
</dbReference>
<gene>
    <name evidence="1" type="primary">glyA</name>
    <name type="ordered locus">Dtpsy_2044</name>
</gene>
<proteinExistence type="inferred from homology"/>
<accession>B9MAC8</accession>
<sequence>MYQRNILVEQTDPEVWAAIQAEDRRQEEHIELIASENYASPAVMAAQGSQLTNKYAEGYPGKRYYGGCENVDVIEQLAIDRIKQLFGAEAANVQPNSGSQANQAVLMAFLKPGDTILGMSLAEGGHLTHGMPLNMSGKWFNVVSYGLNDKEEIDYDALEAKAREHKPKLIIAGASAYALRIDFERFAKIAKEVGAIFWVDIAHYAGLVVAGEYPNPVPFADVVTSTTHKSLRGPRGGIILMKAEHEKAINSAIFPGLQGGPLEHVIAAKAVAFKEALSPEFKQYQQQVTKNAKVFAETLIQRGLRIVSGRTESHVMLVDLRAKGITGKEAEAALGKAHITINKNAIPNDPEKPMVTSGIRVGTPAITTRGFKEEETRLTANLVADVLDNPHDEANLEAVRAKVHALTSRFPVYR</sequence>
<keyword id="KW-0028">Amino-acid biosynthesis</keyword>
<keyword id="KW-0963">Cytoplasm</keyword>
<keyword id="KW-0554">One-carbon metabolism</keyword>
<keyword id="KW-0663">Pyridoxal phosphate</keyword>
<keyword id="KW-1185">Reference proteome</keyword>
<keyword id="KW-0808">Transferase</keyword>
<protein>
    <recommendedName>
        <fullName evidence="1">Serine hydroxymethyltransferase</fullName>
        <shortName evidence="1">SHMT</shortName>
        <shortName evidence="1">Serine methylase</shortName>
        <ecNumber evidence="1">2.1.2.1</ecNumber>
    </recommendedName>
</protein>
<feature type="chain" id="PRO_1000195444" description="Serine hydroxymethyltransferase">
    <location>
        <begin position="1"/>
        <end position="414"/>
    </location>
</feature>
<feature type="binding site" evidence="1">
    <location>
        <position position="121"/>
    </location>
    <ligand>
        <name>(6S)-5,6,7,8-tetrahydrofolate</name>
        <dbReference type="ChEBI" id="CHEBI:57453"/>
    </ligand>
</feature>
<feature type="binding site" evidence="1">
    <location>
        <begin position="125"/>
        <end position="127"/>
    </location>
    <ligand>
        <name>(6S)-5,6,7,8-tetrahydrofolate</name>
        <dbReference type="ChEBI" id="CHEBI:57453"/>
    </ligand>
</feature>
<feature type="site" description="Plays an important role in substrate specificity" evidence="1">
    <location>
        <position position="228"/>
    </location>
</feature>
<feature type="modified residue" description="N6-(pyridoxal phosphate)lysine" evidence="1">
    <location>
        <position position="229"/>
    </location>
</feature>
<name>GLYA_ACIET</name>
<reference key="1">
    <citation type="submission" date="2009-01" db="EMBL/GenBank/DDBJ databases">
        <title>Complete sequence of Diaphorobacter sp. TPSY.</title>
        <authorList>
            <consortium name="US DOE Joint Genome Institute"/>
            <person name="Lucas S."/>
            <person name="Copeland A."/>
            <person name="Lapidus A."/>
            <person name="Glavina del Rio T."/>
            <person name="Tice H."/>
            <person name="Bruce D."/>
            <person name="Goodwin L."/>
            <person name="Pitluck S."/>
            <person name="Chertkov O."/>
            <person name="Brettin T."/>
            <person name="Detter J.C."/>
            <person name="Han C."/>
            <person name="Larimer F."/>
            <person name="Land M."/>
            <person name="Hauser L."/>
            <person name="Kyrpides N."/>
            <person name="Mikhailova N."/>
            <person name="Coates J.D."/>
        </authorList>
    </citation>
    <scope>NUCLEOTIDE SEQUENCE [LARGE SCALE GENOMIC DNA]</scope>
    <source>
        <strain>TPSY</strain>
    </source>
</reference>
<organism>
    <name type="scientific">Acidovorax ebreus (strain TPSY)</name>
    <name type="common">Diaphorobacter sp. (strain TPSY)</name>
    <dbReference type="NCBI Taxonomy" id="535289"/>
    <lineage>
        <taxon>Bacteria</taxon>
        <taxon>Pseudomonadati</taxon>
        <taxon>Pseudomonadota</taxon>
        <taxon>Betaproteobacteria</taxon>
        <taxon>Burkholderiales</taxon>
        <taxon>Comamonadaceae</taxon>
        <taxon>Diaphorobacter</taxon>
    </lineage>
</organism>
<evidence type="ECO:0000255" key="1">
    <source>
        <dbReference type="HAMAP-Rule" id="MF_00051"/>
    </source>
</evidence>
<comment type="function">
    <text evidence="1">Catalyzes the reversible interconversion of serine and glycine with tetrahydrofolate (THF) serving as the one-carbon carrier. This reaction serves as the major source of one-carbon groups required for the biosynthesis of purines, thymidylate, methionine, and other important biomolecules. Also exhibits THF-independent aldolase activity toward beta-hydroxyamino acids, producing glycine and aldehydes, via a retro-aldol mechanism.</text>
</comment>
<comment type="catalytic activity">
    <reaction evidence="1">
        <text>(6R)-5,10-methylene-5,6,7,8-tetrahydrofolate + glycine + H2O = (6S)-5,6,7,8-tetrahydrofolate + L-serine</text>
        <dbReference type="Rhea" id="RHEA:15481"/>
        <dbReference type="ChEBI" id="CHEBI:15377"/>
        <dbReference type="ChEBI" id="CHEBI:15636"/>
        <dbReference type="ChEBI" id="CHEBI:33384"/>
        <dbReference type="ChEBI" id="CHEBI:57305"/>
        <dbReference type="ChEBI" id="CHEBI:57453"/>
        <dbReference type="EC" id="2.1.2.1"/>
    </reaction>
</comment>
<comment type="cofactor">
    <cofactor evidence="1">
        <name>pyridoxal 5'-phosphate</name>
        <dbReference type="ChEBI" id="CHEBI:597326"/>
    </cofactor>
</comment>
<comment type="pathway">
    <text evidence="1">One-carbon metabolism; tetrahydrofolate interconversion.</text>
</comment>
<comment type="pathway">
    <text evidence="1">Amino-acid biosynthesis; glycine biosynthesis; glycine from L-serine: step 1/1.</text>
</comment>
<comment type="subunit">
    <text evidence="1">Homodimer.</text>
</comment>
<comment type="subcellular location">
    <subcellularLocation>
        <location evidence="1">Cytoplasm</location>
    </subcellularLocation>
</comment>
<comment type="similarity">
    <text evidence="1">Belongs to the SHMT family.</text>
</comment>